<protein>
    <recommendedName>
        <fullName evidence="1">GTP 3',8-cyclase</fullName>
        <ecNumber evidence="1">4.1.99.22</ecNumber>
    </recommendedName>
    <alternativeName>
        <fullName evidence="1">Molybdenum cofactor biosynthesis protein A</fullName>
    </alternativeName>
</protein>
<sequence length="340" mass="39011">MVEQIKDKLGRPIRDLRLSVTDRCNFRCDYCMPKEVFGDDFVFLPKNELLTFDEMARIAKVYAELGVKKIRITGGEPLMRRDLDVLIAKLNQIDGIEDIGLTTNGLLLKKHGQKLYDAGLRRINVSLDAIDDTLFQSINNCNIKATTILEQIDYATSIGLNVKVNVVIQKGINDDQIIPMLEYFKDKHIEIRFIEFMDVGNDNGWDFSKVVTKDDMLTMIEQHFEIDPVEPKYFGEVAKYYRHKDNGVQFGLITSVSQSFCSTCTRARLSSDGKFYGCLFATVDGFNVKAFIRSGVTDEELKEQFKALWQIRDDRYSDERTAQTVANRQRKKINMNYIGG</sequence>
<feature type="chain" id="PRO_1000054230" description="GTP 3',8-cyclase">
    <location>
        <begin position="1"/>
        <end position="340"/>
    </location>
</feature>
<feature type="domain" description="Radical SAM core" evidence="2">
    <location>
        <begin position="8"/>
        <end position="230"/>
    </location>
</feature>
<feature type="binding site" evidence="1">
    <location>
        <position position="17"/>
    </location>
    <ligand>
        <name>GTP</name>
        <dbReference type="ChEBI" id="CHEBI:37565"/>
    </ligand>
</feature>
<feature type="binding site" evidence="1">
    <location>
        <position position="24"/>
    </location>
    <ligand>
        <name>[4Fe-4S] cluster</name>
        <dbReference type="ChEBI" id="CHEBI:49883"/>
        <label>1</label>
        <note>4Fe-4S-S-AdoMet</note>
    </ligand>
</feature>
<feature type="binding site" evidence="1">
    <location>
        <position position="28"/>
    </location>
    <ligand>
        <name>[4Fe-4S] cluster</name>
        <dbReference type="ChEBI" id="CHEBI:49883"/>
        <label>1</label>
        <note>4Fe-4S-S-AdoMet</note>
    </ligand>
</feature>
<feature type="binding site" evidence="1">
    <location>
        <position position="30"/>
    </location>
    <ligand>
        <name>S-adenosyl-L-methionine</name>
        <dbReference type="ChEBI" id="CHEBI:59789"/>
    </ligand>
</feature>
<feature type="binding site" evidence="1">
    <location>
        <position position="31"/>
    </location>
    <ligand>
        <name>[4Fe-4S] cluster</name>
        <dbReference type="ChEBI" id="CHEBI:49883"/>
        <label>1</label>
        <note>4Fe-4S-S-AdoMet</note>
    </ligand>
</feature>
<feature type="binding site" evidence="1">
    <location>
        <position position="71"/>
    </location>
    <ligand>
        <name>GTP</name>
        <dbReference type="ChEBI" id="CHEBI:37565"/>
    </ligand>
</feature>
<feature type="binding site" evidence="1">
    <location>
        <position position="75"/>
    </location>
    <ligand>
        <name>S-adenosyl-L-methionine</name>
        <dbReference type="ChEBI" id="CHEBI:59789"/>
    </ligand>
</feature>
<feature type="binding site" evidence="1">
    <location>
        <position position="102"/>
    </location>
    <ligand>
        <name>GTP</name>
        <dbReference type="ChEBI" id="CHEBI:37565"/>
    </ligand>
</feature>
<feature type="binding site" evidence="1">
    <location>
        <position position="126"/>
    </location>
    <ligand>
        <name>S-adenosyl-L-methionine</name>
        <dbReference type="ChEBI" id="CHEBI:59789"/>
    </ligand>
</feature>
<feature type="binding site" evidence="1">
    <location>
        <position position="163"/>
    </location>
    <ligand>
        <name>GTP</name>
        <dbReference type="ChEBI" id="CHEBI:37565"/>
    </ligand>
</feature>
<feature type="binding site" evidence="1">
    <location>
        <position position="197"/>
    </location>
    <ligand>
        <name>S-adenosyl-L-methionine</name>
        <dbReference type="ChEBI" id="CHEBI:59789"/>
    </ligand>
</feature>
<feature type="binding site" evidence="1">
    <location>
        <position position="261"/>
    </location>
    <ligand>
        <name>[4Fe-4S] cluster</name>
        <dbReference type="ChEBI" id="CHEBI:49883"/>
        <label>2</label>
        <note>4Fe-4S-substrate</note>
    </ligand>
</feature>
<feature type="binding site" evidence="1">
    <location>
        <position position="264"/>
    </location>
    <ligand>
        <name>[4Fe-4S] cluster</name>
        <dbReference type="ChEBI" id="CHEBI:49883"/>
        <label>2</label>
        <note>4Fe-4S-substrate</note>
    </ligand>
</feature>
<feature type="binding site" evidence="1">
    <location>
        <begin position="266"/>
        <end position="268"/>
    </location>
    <ligand>
        <name>GTP</name>
        <dbReference type="ChEBI" id="CHEBI:37565"/>
    </ligand>
</feature>
<feature type="binding site" evidence="1">
    <location>
        <position position="278"/>
    </location>
    <ligand>
        <name>[4Fe-4S] cluster</name>
        <dbReference type="ChEBI" id="CHEBI:49883"/>
        <label>2</label>
        <note>4Fe-4S-substrate</note>
    </ligand>
</feature>
<organism>
    <name type="scientific">Staphylococcus aureus (strain bovine RF122 / ET3-1)</name>
    <dbReference type="NCBI Taxonomy" id="273036"/>
    <lineage>
        <taxon>Bacteria</taxon>
        <taxon>Bacillati</taxon>
        <taxon>Bacillota</taxon>
        <taxon>Bacilli</taxon>
        <taxon>Bacillales</taxon>
        <taxon>Staphylococcaceae</taxon>
        <taxon>Staphylococcus</taxon>
    </lineage>
</organism>
<reference key="1">
    <citation type="journal article" date="2007" name="PLoS ONE">
        <title>Molecular correlates of host specialization in Staphylococcus aureus.</title>
        <authorList>
            <person name="Herron-Olson L."/>
            <person name="Fitzgerald J.R."/>
            <person name="Musser J.M."/>
            <person name="Kapur V."/>
        </authorList>
    </citation>
    <scope>NUCLEOTIDE SEQUENCE [LARGE SCALE GENOMIC DNA]</scope>
    <source>
        <strain>bovine RF122 / ET3-1</strain>
    </source>
</reference>
<evidence type="ECO:0000255" key="1">
    <source>
        <dbReference type="HAMAP-Rule" id="MF_01225"/>
    </source>
</evidence>
<evidence type="ECO:0000255" key="2">
    <source>
        <dbReference type="PROSITE-ProRule" id="PRU01266"/>
    </source>
</evidence>
<name>MOAA_STAAB</name>
<proteinExistence type="inferred from homology"/>
<gene>
    <name evidence="1" type="primary">moaA</name>
    <name type="ordered locus">SAB2140c</name>
</gene>
<keyword id="KW-0004">4Fe-4S</keyword>
<keyword id="KW-0342">GTP-binding</keyword>
<keyword id="KW-0408">Iron</keyword>
<keyword id="KW-0411">Iron-sulfur</keyword>
<keyword id="KW-0456">Lyase</keyword>
<keyword id="KW-0479">Metal-binding</keyword>
<keyword id="KW-0501">Molybdenum cofactor biosynthesis</keyword>
<keyword id="KW-0547">Nucleotide-binding</keyword>
<keyword id="KW-0949">S-adenosyl-L-methionine</keyword>
<comment type="function">
    <text evidence="1">Catalyzes the cyclization of GTP to (8S)-3',8-cyclo-7,8-dihydroguanosine 5'-triphosphate.</text>
</comment>
<comment type="catalytic activity">
    <reaction evidence="1">
        <text>GTP + AH2 + S-adenosyl-L-methionine = (8S)-3',8-cyclo-7,8-dihydroguanosine 5'-triphosphate + 5'-deoxyadenosine + L-methionine + A + H(+)</text>
        <dbReference type="Rhea" id="RHEA:49576"/>
        <dbReference type="ChEBI" id="CHEBI:13193"/>
        <dbReference type="ChEBI" id="CHEBI:15378"/>
        <dbReference type="ChEBI" id="CHEBI:17319"/>
        <dbReference type="ChEBI" id="CHEBI:17499"/>
        <dbReference type="ChEBI" id="CHEBI:37565"/>
        <dbReference type="ChEBI" id="CHEBI:57844"/>
        <dbReference type="ChEBI" id="CHEBI:59789"/>
        <dbReference type="ChEBI" id="CHEBI:131766"/>
        <dbReference type="EC" id="4.1.99.22"/>
    </reaction>
</comment>
<comment type="cofactor">
    <cofactor evidence="1">
        <name>[4Fe-4S] cluster</name>
        <dbReference type="ChEBI" id="CHEBI:49883"/>
    </cofactor>
    <text evidence="1">Binds 2 [4Fe-4S] clusters. Binds 1 [4Fe-4S] cluster coordinated with 3 cysteines and an exchangeable S-adenosyl-L-methionine and 1 [4Fe-4S] cluster coordinated with 3 cysteines and the GTP-derived substrate.</text>
</comment>
<comment type="pathway">
    <text evidence="1">Cofactor biosynthesis; molybdopterin biosynthesis.</text>
</comment>
<comment type="subunit">
    <text evidence="1">Monomer and homodimer.</text>
</comment>
<comment type="similarity">
    <text evidence="1">Belongs to the radical SAM superfamily. MoaA family.</text>
</comment>
<dbReference type="EC" id="4.1.99.22" evidence="1"/>
<dbReference type="EMBL" id="AJ938182">
    <property type="protein sequence ID" value="CAI81829.1"/>
    <property type="molecule type" value="Genomic_DNA"/>
</dbReference>
<dbReference type="RefSeq" id="WP_011382365.1">
    <property type="nucleotide sequence ID" value="NC_007622.1"/>
</dbReference>
<dbReference type="SMR" id="Q2YYS8"/>
<dbReference type="KEGG" id="sab:SAB2140c"/>
<dbReference type="HOGENOM" id="CLU_009273_0_1_9"/>
<dbReference type="UniPathway" id="UPA00344"/>
<dbReference type="GO" id="GO:0051539">
    <property type="term" value="F:4 iron, 4 sulfur cluster binding"/>
    <property type="evidence" value="ECO:0007669"/>
    <property type="project" value="UniProtKB-UniRule"/>
</dbReference>
<dbReference type="GO" id="GO:0061799">
    <property type="term" value="F:cyclic pyranopterin monophosphate synthase activity"/>
    <property type="evidence" value="ECO:0007669"/>
    <property type="project" value="TreeGrafter"/>
</dbReference>
<dbReference type="GO" id="GO:0061798">
    <property type="term" value="F:GTP 3',8'-cyclase activity"/>
    <property type="evidence" value="ECO:0007669"/>
    <property type="project" value="UniProtKB-UniRule"/>
</dbReference>
<dbReference type="GO" id="GO:0005525">
    <property type="term" value="F:GTP binding"/>
    <property type="evidence" value="ECO:0007669"/>
    <property type="project" value="UniProtKB-UniRule"/>
</dbReference>
<dbReference type="GO" id="GO:0046872">
    <property type="term" value="F:metal ion binding"/>
    <property type="evidence" value="ECO:0007669"/>
    <property type="project" value="UniProtKB-KW"/>
</dbReference>
<dbReference type="GO" id="GO:1904047">
    <property type="term" value="F:S-adenosyl-L-methionine binding"/>
    <property type="evidence" value="ECO:0007669"/>
    <property type="project" value="UniProtKB-UniRule"/>
</dbReference>
<dbReference type="GO" id="GO:0006777">
    <property type="term" value="P:Mo-molybdopterin cofactor biosynthetic process"/>
    <property type="evidence" value="ECO:0007669"/>
    <property type="project" value="UniProtKB-UniRule"/>
</dbReference>
<dbReference type="CDD" id="cd01335">
    <property type="entry name" value="Radical_SAM"/>
    <property type="match status" value="1"/>
</dbReference>
<dbReference type="CDD" id="cd21117">
    <property type="entry name" value="Twitch_MoaA"/>
    <property type="match status" value="1"/>
</dbReference>
<dbReference type="Gene3D" id="3.20.20.70">
    <property type="entry name" value="Aldolase class I"/>
    <property type="match status" value="1"/>
</dbReference>
<dbReference type="HAMAP" id="MF_01225_B">
    <property type="entry name" value="MoaA_B"/>
    <property type="match status" value="1"/>
</dbReference>
<dbReference type="InterPro" id="IPR013785">
    <property type="entry name" value="Aldolase_TIM"/>
</dbReference>
<dbReference type="InterPro" id="IPR006638">
    <property type="entry name" value="Elp3/MiaA/NifB-like_rSAM"/>
</dbReference>
<dbReference type="InterPro" id="IPR013483">
    <property type="entry name" value="MoaA"/>
</dbReference>
<dbReference type="InterPro" id="IPR000385">
    <property type="entry name" value="MoaA_NifB_PqqE_Fe-S-bd_CS"/>
</dbReference>
<dbReference type="InterPro" id="IPR010505">
    <property type="entry name" value="MoaA_twitch"/>
</dbReference>
<dbReference type="InterPro" id="IPR050105">
    <property type="entry name" value="MoCo_biosynth_MoaA/MoaC"/>
</dbReference>
<dbReference type="InterPro" id="IPR007197">
    <property type="entry name" value="rSAM"/>
</dbReference>
<dbReference type="NCBIfam" id="TIGR02666">
    <property type="entry name" value="moaA"/>
    <property type="match status" value="1"/>
</dbReference>
<dbReference type="PANTHER" id="PTHR22960:SF0">
    <property type="entry name" value="MOLYBDENUM COFACTOR BIOSYNTHESIS PROTEIN 1"/>
    <property type="match status" value="1"/>
</dbReference>
<dbReference type="PANTHER" id="PTHR22960">
    <property type="entry name" value="MOLYBDOPTERIN COFACTOR SYNTHESIS PROTEIN A"/>
    <property type="match status" value="1"/>
</dbReference>
<dbReference type="Pfam" id="PF06463">
    <property type="entry name" value="Mob_synth_C"/>
    <property type="match status" value="1"/>
</dbReference>
<dbReference type="Pfam" id="PF04055">
    <property type="entry name" value="Radical_SAM"/>
    <property type="match status" value="1"/>
</dbReference>
<dbReference type="SFLD" id="SFLDF00276">
    <property type="entry name" value="cyclic_pyranopterin_phosphate"/>
    <property type="match status" value="1"/>
</dbReference>
<dbReference type="SFLD" id="SFLDG01383">
    <property type="entry name" value="cyclic_pyranopterin_phosphate"/>
    <property type="match status" value="1"/>
</dbReference>
<dbReference type="SMART" id="SM00729">
    <property type="entry name" value="Elp3"/>
    <property type="match status" value="1"/>
</dbReference>
<dbReference type="SUPFAM" id="SSF102114">
    <property type="entry name" value="Radical SAM enzymes"/>
    <property type="match status" value="1"/>
</dbReference>
<dbReference type="PROSITE" id="PS01305">
    <property type="entry name" value="MOAA_NIFB_PQQE"/>
    <property type="match status" value="1"/>
</dbReference>
<dbReference type="PROSITE" id="PS51918">
    <property type="entry name" value="RADICAL_SAM"/>
    <property type="match status" value="1"/>
</dbReference>
<accession>Q2YYS8</accession>